<protein>
    <recommendedName>
        <fullName evidence="1">ATP-dependent lipid A-core flippase</fullName>
        <ecNumber evidence="1">7.5.2.6</ecNumber>
    </recommendedName>
    <alternativeName>
        <fullName evidence="1">Lipid A export ATP-binding/permease protein MsbA</fullName>
    </alternativeName>
</protein>
<organism>
    <name type="scientific">Methylobacillus flagellatus (strain ATCC 51484 / DSM 6875 / VKM B-1610 / KT)</name>
    <dbReference type="NCBI Taxonomy" id="265072"/>
    <lineage>
        <taxon>Bacteria</taxon>
        <taxon>Pseudomonadati</taxon>
        <taxon>Pseudomonadota</taxon>
        <taxon>Betaproteobacteria</taxon>
        <taxon>Nitrosomonadales</taxon>
        <taxon>Methylophilaceae</taxon>
        <taxon>Methylobacillus</taxon>
    </lineage>
</organism>
<gene>
    <name evidence="1" type="primary">msbA</name>
    <name type="ordered locus">Mfla_2090</name>
</gene>
<feature type="chain" id="PRO_0000271633" description="ATP-dependent lipid A-core flippase">
    <location>
        <begin position="1"/>
        <end position="583"/>
    </location>
</feature>
<feature type="transmembrane region" description="Helical" evidence="1">
    <location>
        <begin position="32"/>
        <end position="52"/>
    </location>
</feature>
<feature type="transmembrane region" description="Helical" evidence="1">
    <location>
        <begin position="71"/>
        <end position="91"/>
    </location>
</feature>
<feature type="transmembrane region" description="Helical" evidence="1">
    <location>
        <begin position="115"/>
        <end position="135"/>
    </location>
</feature>
<feature type="transmembrane region" description="Helical" evidence="1">
    <location>
        <begin position="160"/>
        <end position="180"/>
    </location>
</feature>
<feature type="transmembrane region" description="Helical" evidence="1">
    <location>
        <begin position="259"/>
        <end position="279"/>
    </location>
</feature>
<feature type="transmembrane region" description="Helical" evidence="1">
    <location>
        <begin position="286"/>
        <end position="306"/>
    </location>
</feature>
<feature type="domain" description="ABC transmembrane type-1" evidence="1">
    <location>
        <begin position="34"/>
        <end position="312"/>
    </location>
</feature>
<feature type="domain" description="ABC transporter" evidence="1">
    <location>
        <begin position="344"/>
        <end position="580"/>
    </location>
</feature>
<feature type="binding site" evidence="1">
    <location>
        <begin position="378"/>
        <end position="385"/>
    </location>
    <ligand>
        <name>ATP</name>
        <dbReference type="ChEBI" id="CHEBI:30616"/>
    </ligand>
</feature>
<sequence>MSKTALGKANASVQSARALYLRLLKYAARYWVAFLISIIALVTFSATNTGFLATIKLVTDAGFVNQDSTKLHLLPFMLFGLLAIRALAGFISNFAMRWVARRVVENLRQDTFRRLMSLPVSFFDAVSAGVVTSKLTYDTEQMAGAATKVAMSAVRDTLTILGMVGYMLYLDWQLTLIFAVVAPAMAWYLKSMTPKLRSSGKAVQQTMGEMTKVIEEAVSGQRMVKIFGGGDYEYQRFTKVAGKNRHMQIRLARFSGLNSMVVELLAGVALALVVFYAVGKFSAGEFAAFIGALLMLIGPVKTLTSLNEELQVGLAAAHSVFELIDSIPEVDEGHEEIGRAEGSIVFENVTLQYPSAQRPALLDLNFTVKPGEKIALVGRSGGGKTTLVNLLPRFYEVQQGRVLIDGVDVRNMSLKSLRQQFSLVSQDVILFNDTVFNNIAYGVLRNASEEDVIAAAKAAHAWDFIQQLPNGLQSEIGDRGVRLSGGQRQRLAIARAILKNAPILLLDEATSALDTESERHVQAALDELMQNRTSIVIAHRLSTIENADRIMVMEQGRIIEGGSHEELLALDGHYAKLYRKQFH</sequence>
<comment type="function">
    <text evidence="1">Involved in lipopolysaccharide (LPS) biosynthesis. Translocates lipid A-core from the inner to the outer leaflet of the inner membrane. Transmembrane domains (TMD) form a pore in the inner membrane and the ATP-binding domain (NBD) is responsible for energy generation.</text>
</comment>
<comment type="catalytic activity">
    <reaction evidence="1">
        <text>ATP + H2O + lipid A-core oligosaccharideSide 1 = ADP + phosphate + lipid A-core oligosaccharideSide 2.</text>
        <dbReference type="EC" id="7.5.2.6"/>
    </reaction>
</comment>
<comment type="subunit">
    <text evidence="1">Homodimer.</text>
</comment>
<comment type="subcellular location">
    <subcellularLocation>
        <location evidence="1">Cell inner membrane</location>
        <topology evidence="1">Multi-pass membrane protein</topology>
    </subcellularLocation>
</comment>
<comment type="domain">
    <text evidence="1">In MsbA the ATP-binding domain (NBD) and the transmembrane domain (TMD) are fused.</text>
</comment>
<comment type="similarity">
    <text evidence="1">Belongs to the ABC transporter superfamily. Lipid exporter (TC 3.A.1.106) family.</text>
</comment>
<accession>Q1GZI0</accession>
<keyword id="KW-0067">ATP-binding</keyword>
<keyword id="KW-0997">Cell inner membrane</keyword>
<keyword id="KW-1003">Cell membrane</keyword>
<keyword id="KW-0445">Lipid transport</keyword>
<keyword id="KW-0472">Membrane</keyword>
<keyword id="KW-0547">Nucleotide-binding</keyword>
<keyword id="KW-1185">Reference proteome</keyword>
<keyword id="KW-1278">Translocase</keyword>
<keyword id="KW-0812">Transmembrane</keyword>
<keyword id="KW-1133">Transmembrane helix</keyword>
<keyword id="KW-0813">Transport</keyword>
<evidence type="ECO:0000255" key="1">
    <source>
        <dbReference type="HAMAP-Rule" id="MF_01703"/>
    </source>
</evidence>
<reference key="1">
    <citation type="submission" date="2006-03" db="EMBL/GenBank/DDBJ databases">
        <title>Complete sequence of Methylobacillus flagellatus KT.</title>
        <authorList>
            <consortium name="US DOE Joint Genome Institute"/>
            <person name="Copeland A."/>
            <person name="Lucas S."/>
            <person name="Lapidus A."/>
            <person name="Barry K."/>
            <person name="Detter J.C."/>
            <person name="Glavina del Rio T."/>
            <person name="Hammon N."/>
            <person name="Israni S."/>
            <person name="Dalin E."/>
            <person name="Tice H."/>
            <person name="Pitluck S."/>
            <person name="Brettin T."/>
            <person name="Bruce D."/>
            <person name="Han C."/>
            <person name="Tapia R."/>
            <person name="Saunders E."/>
            <person name="Gilna P."/>
            <person name="Schmutz J."/>
            <person name="Larimer F."/>
            <person name="Land M."/>
            <person name="Kyrpides N."/>
            <person name="Anderson I."/>
            <person name="Richardson P."/>
        </authorList>
    </citation>
    <scope>NUCLEOTIDE SEQUENCE [LARGE SCALE GENOMIC DNA]</scope>
    <source>
        <strain>ATCC 51484 / DSM 6875 / VKM B-1610 / KT</strain>
    </source>
</reference>
<proteinExistence type="inferred from homology"/>
<name>MSBA_METFK</name>
<dbReference type="EC" id="7.5.2.6" evidence="1"/>
<dbReference type="EMBL" id="CP000284">
    <property type="protein sequence ID" value="ABE50357.1"/>
    <property type="molecule type" value="Genomic_DNA"/>
</dbReference>
<dbReference type="RefSeq" id="WP_011480311.1">
    <property type="nucleotide sequence ID" value="NC_007947.1"/>
</dbReference>
<dbReference type="SMR" id="Q1GZI0"/>
<dbReference type="STRING" id="265072.Mfla_2090"/>
<dbReference type="KEGG" id="mfa:Mfla_2090"/>
<dbReference type="eggNOG" id="COG1132">
    <property type="taxonomic scope" value="Bacteria"/>
</dbReference>
<dbReference type="HOGENOM" id="CLU_000604_84_3_4"/>
<dbReference type="OrthoDB" id="8554730at2"/>
<dbReference type="Proteomes" id="UP000002440">
    <property type="component" value="Chromosome"/>
</dbReference>
<dbReference type="GO" id="GO:0005886">
    <property type="term" value="C:plasma membrane"/>
    <property type="evidence" value="ECO:0007669"/>
    <property type="project" value="UniProtKB-SubCell"/>
</dbReference>
<dbReference type="GO" id="GO:0015421">
    <property type="term" value="F:ABC-type oligopeptide transporter activity"/>
    <property type="evidence" value="ECO:0007669"/>
    <property type="project" value="TreeGrafter"/>
</dbReference>
<dbReference type="GO" id="GO:0005524">
    <property type="term" value="F:ATP binding"/>
    <property type="evidence" value="ECO:0007669"/>
    <property type="project" value="UniProtKB-KW"/>
</dbReference>
<dbReference type="GO" id="GO:0016887">
    <property type="term" value="F:ATP hydrolysis activity"/>
    <property type="evidence" value="ECO:0007669"/>
    <property type="project" value="InterPro"/>
</dbReference>
<dbReference type="GO" id="GO:0034040">
    <property type="term" value="F:ATPase-coupled lipid transmembrane transporter activity"/>
    <property type="evidence" value="ECO:0007669"/>
    <property type="project" value="InterPro"/>
</dbReference>
<dbReference type="CDD" id="cd18552">
    <property type="entry name" value="ABC_6TM_MsbA_like"/>
    <property type="match status" value="1"/>
</dbReference>
<dbReference type="CDD" id="cd03251">
    <property type="entry name" value="ABCC_MsbA"/>
    <property type="match status" value="1"/>
</dbReference>
<dbReference type="FunFam" id="3.40.50.300:FF:000218">
    <property type="entry name" value="Multidrug ABC transporter ATP-binding protein"/>
    <property type="match status" value="1"/>
</dbReference>
<dbReference type="Gene3D" id="1.20.1560.10">
    <property type="entry name" value="ABC transporter type 1, transmembrane domain"/>
    <property type="match status" value="1"/>
</dbReference>
<dbReference type="Gene3D" id="3.40.50.300">
    <property type="entry name" value="P-loop containing nucleotide triphosphate hydrolases"/>
    <property type="match status" value="1"/>
</dbReference>
<dbReference type="InterPro" id="IPR003593">
    <property type="entry name" value="AAA+_ATPase"/>
</dbReference>
<dbReference type="InterPro" id="IPR011527">
    <property type="entry name" value="ABC1_TM_dom"/>
</dbReference>
<dbReference type="InterPro" id="IPR036640">
    <property type="entry name" value="ABC1_TM_sf"/>
</dbReference>
<dbReference type="InterPro" id="IPR003439">
    <property type="entry name" value="ABC_transporter-like_ATP-bd"/>
</dbReference>
<dbReference type="InterPro" id="IPR017871">
    <property type="entry name" value="ABC_transporter-like_CS"/>
</dbReference>
<dbReference type="InterPro" id="IPR011917">
    <property type="entry name" value="ABC_transpr_lipidA"/>
</dbReference>
<dbReference type="InterPro" id="IPR027417">
    <property type="entry name" value="P-loop_NTPase"/>
</dbReference>
<dbReference type="InterPro" id="IPR039421">
    <property type="entry name" value="Type_1_exporter"/>
</dbReference>
<dbReference type="NCBIfam" id="TIGR02203">
    <property type="entry name" value="MsbA_lipidA"/>
    <property type="match status" value="1"/>
</dbReference>
<dbReference type="PANTHER" id="PTHR43394:SF1">
    <property type="entry name" value="ATP-BINDING CASSETTE SUB-FAMILY B MEMBER 10, MITOCHONDRIAL"/>
    <property type="match status" value="1"/>
</dbReference>
<dbReference type="PANTHER" id="PTHR43394">
    <property type="entry name" value="ATP-DEPENDENT PERMEASE MDL1, MITOCHONDRIAL"/>
    <property type="match status" value="1"/>
</dbReference>
<dbReference type="Pfam" id="PF00664">
    <property type="entry name" value="ABC_membrane"/>
    <property type="match status" value="1"/>
</dbReference>
<dbReference type="Pfam" id="PF00005">
    <property type="entry name" value="ABC_tran"/>
    <property type="match status" value="1"/>
</dbReference>
<dbReference type="SMART" id="SM00382">
    <property type="entry name" value="AAA"/>
    <property type="match status" value="1"/>
</dbReference>
<dbReference type="SUPFAM" id="SSF90123">
    <property type="entry name" value="ABC transporter transmembrane region"/>
    <property type="match status" value="1"/>
</dbReference>
<dbReference type="SUPFAM" id="SSF52540">
    <property type="entry name" value="P-loop containing nucleoside triphosphate hydrolases"/>
    <property type="match status" value="1"/>
</dbReference>
<dbReference type="PROSITE" id="PS50929">
    <property type="entry name" value="ABC_TM1F"/>
    <property type="match status" value="1"/>
</dbReference>
<dbReference type="PROSITE" id="PS00211">
    <property type="entry name" value="ABC_TRANSPORTER_1"/>
    <property type="match status" value="1"/>
</dbReference>
<dbReference type="PROSITE" id="PS50893">
    <property type="entry name" value="ABC_TRANSPORTER_2"/>
    <property type="match status" value="1"/>
</dbReference>
<dbReference type="PROSITE" id="PS51239">
    <property type="entry name" value="MSBA"/>
    <property type="match status" value="1"/>
</dbReference>